<accession>Q6BKB1</accession>
<dbReference type="EMBL" id="CR382138">
    <property type="protein sequence ID" value="CAG89766.2"/>
    <property type="molecule type" value="Genomic_DNA"/>
</dbReference>
<dbReference type="RefSeq" id="XP_461360.2">
    <property type="nucleotide sequence ID" value="XM_461360.1"/>
</dbReference>
<dbReference type="FunCoup" id="Q6BKB1">
    <property type="interactions" value="361"/>
</dbReference>
<dbReference type="STRING" id="284592.Q6BKB1"/>
<dbReference type="GeneID" id="2903359"/>
<dbReference type="KEGG" id="dha:DEHA2F23408g"/>
<dbReference type="VEuPathDB" id="FungiDB:DEHA2F23408g"/>
<dbReference type="eggNOG" id="KOG2341">
    <property type="taxonomic scope" value="Eukaryota"/>
</dbReference>
<dbReference type="HOGENOM" id="CLU_036634_1_0_1"/>
<dbReference type="InParanoid" id="Q6BKB1"/>
<dbReference type="OMA" id="CEQWISH"/>
<dbReference type="OrthoDB" id="21060at2759"/>
<dbReference type="Proteomes" id="UP000000599">
    <property type="component" value="Chromosome F"/>
</dbReference>
<dbReference type="GO" id="GO:0005669">
    <property type="term" value="C:transcription factor TFIID complex"/>
    <property type="evidence" value="ECO:0007669"/>
    <property type="project" value="InterPro"/>
</dbReference>
<dbReference type="GO" id="GO:0003677">
    <property type="term" value="F:DNA binding"/>
    <property type="evidence" value="ECO:0007669"/>
    <property type="project" value="TreeGrafter"/>
</dbReference>
<dbReference type="GO" id="GO:0016251">
    <property type="term" value="F:RNA polymerase II general transcription initiation factor activity"/>
    <property type="evidence" value="ECO:0007669"/>
    <property type="project" value="TreeGrafter"/>
</dbReference>
<dbReference type="GO" id="GO:0006367">
    <property type="term" value="P:transcription initiation at RNA polymerase II promoter"/>
    <property type="evidence" value="ECO:0007669"/>
    <property type="project" value="TreeGrafter"/>
</dbReference>
<dbReference type="CDD" id="cd08045">
    <property type="entry name" value="HFD_TAF4"/>
    <property type="match status" value="1"/>
</dbReference>
<dbReference type="InterPro" id="IPR045144">
    <property type="entry name" value="TAF4"/>
</dbReference>
<dbReference type="InterPro" id="IPR007900">
    <property type="entry name" value="TAF4_C"/>
</dbReference>
<dbReference type="PANTHER" id="PTHR15138">
    <property type="entry name" value="TRANSCRIPTION INITIATION FACTOR TFIID SUBUNIT 4"/>
    <property type="match status" value="1"/>
</dbReference>
<dbReference type="PANTHER" id="PTHR15138:SF14">
    <property type="entry name" value="TRANSCRIPTION INITIATION FACTOR TFIID SUBUNIT 4"/>
    <property type="match status" value="1"/>
</dbReference>
<dbReference type="Pfam" id="PF05236">
    <property type="entry name" value="TAF4"/>
    <property type="match status" value="1"/>
</dbReference>
<comment type="function">
    <text evidence="1">Functions as a component of the DNA-binding general transcription factor complex TFIID. Binding of TFIID to a promoter (with or without TATA element) is the initial step in pre-initiation complex (PIC) formation. TFIID plays a key role in the regulation of gene expression by RNA polymerase II through different activities such as transcription activator interaction, core promoter recognition and selectivity, TFIIA and TFIIB interaction, chromatin modification (histone acetylation by TAF1), facilitation of DNA opening and initiation of transcription (By similarity).</text>
</comment>
<comment type="subunit">
    <text evidence="1">The 1.2 MDa TFIID complex is composed of TATA binding protein (TBP) and the 14 TBP-associated factors.</text>
</comment>
<comment type="subcellular location">
    <subcellularLocation>
        <location evidence="1">Nucleus</location>
    </subcellularLocation>
</comment>
<comment type="similarity">
    <text evidence="4">Belongs to the TAF4 family.</text>
</comment>
<name>TAF4_DEBHA</name>
<reference key="1">
    <citation type="journal article" date="2004" name="Nature">
        <title>Genome evolution in yeasts.</title>
        <authorList>
            <person name="Dujon B."/>
            <person name="Sherman D."/>
            <person name="Fischer G."/>
            <person name="Durrens P."/>
            <person name="Casaregola S."/>
            <person name="Lafontaine I."/>
            <person name="de Montigny J."/>
            <person name="Marck C."/>
            <person name="Neuveglise C."/>
            <person name="Talla E."/>
            <person name="Goffard N."/>
            <person name="Frangeul L."/>
            <person name="Aigle M."/>
            <person name="Anthouard V."/>
            <person name="Babour A."/>
            <person name="Barbe V."/>
            <person name="Barnay S."/>
            <person name="Blanchin S."/>
            <person name="Beckerich J.-M."/>
            <person name="Beyne E."/>
            <person name="Bleykasten C."/>
            <person name="Boisrame A."/>
            <person name="Boyer J."/>
            <person name="Cattolico L."/>
            <person name="Confanioleri F."/>
            <person name="de Daruvar A."/>
            <person name="Despons L."/>
            <person name="Fabre E."/>
            <person name="Fairhead C."/>
            <person name="Ferry-Dumazet H."/>
            <person name="Groppi A."/>
            <person name="Hantraye F."/>
            <person name="Hennequin C."/>
            <person name="Jauniaux N."/>
            <person name="Joyet P."/>
            <person name="Kachouri R."/>
            <person name="Kerrest A."/>
            <person name="Koszul R."/>
            <person name="Lemaire M."/>
            <person name="Lesur I."/>
            <person name="Ma L."/>
            <person name="Muller H."/>
            <person name="Nicaud J.-M."/>
            <person name="Nikolski M."/>
            <person name="Oztas S."/>
            <person name="Ozier-Kalogeropoulos O."/>
            <person name="Pellenz S."/>
            <person name="Potier S."/>
            <person name="Richard G.-F."/>
            <person name="Straub M.-L."/>
            <person name="Suleau A."/>
            <person name="Swennen D."/>
            <person name="Tekaia F."/>
            <person name="Wesolowski-Louvel M."/>
            <person name="Westhof E."/>
            <person name="Wirth B."/>
            <person name="Zeniou-Meyer M."/>
            <person name="Zivanovic Y."/>
            <person name="Bolotin-Fukuhara M."/>
            <person name="Thierry A."/>
            <person name="Bouchier C."/>
            <person name="Caudron B."/>
            <person name="Scarpelli C."/>
            <person name="Gaillardin C."/>
            <person name="Weissenbach J."/>
            <person name="Wincker P."/>
            <person name="Souciet J.-L."/>
        </authorList>
    </citation>
    <scope>NUCLEOTIDE SEQUENCE [LARGE SCALE GENOMIC DNA]</scope>
    <source>
        <strain>ATCC 36239 / CBS 767 / BCRC 21394 / JCM 1990 / NBRC 0083 / IGC 2968</strain>
    </source>
</reference>
<proteinExistence type="inferred from homology"/>
<feature type="chain" id="PRO_0000343439" description="Transcription initiation factor TFIID subunit 4">
    <location>
        <begin position="1"/>
        <end position="522"/>
    </location>
</feature>
<feature type="domain" description="Histone-fold">
    <location>
        <begin position="293"/>
        <end position="379"/>
    </location>
</feature>
<feature type="region of interest" description="Disordered" evidence="3">
    <location>
        <begin position="1"/>
        <end position="172"/>
    </location>
</feature>
<feature type="region of interest" description="Disordered" evidence="3">
    <location>
        <begin position="194"/>
        <end position="237"/>
    </location>
</feature>
<feature type="region of interest" description="Disordered" evidence="3">
    <location>
        <begin position="346"/>
        <end position="375"/>
    </location>
</feature>
<feature type="region of interest" description="Disordered" evidence="3">
    <location>
        <begin position="398"/>
        <end position="420"/>
    </location>
</feature>
<feature type="region of interest" description="Disordered" evidence="3">
    <location>
        <begin position="448"/>
        <end position="479"/>
    </location>
</feature>
<feature type="coiled-coil region" evidence="2">
    <location>
        <begin position="8"/>
        <end position="37"/>
    </location>
</feature>
<feature type="coiled-coil region" evidence="2">
    <location>
        <begin position="368"/>
        <end position="395"/>
    </location>
</feature>
<feature type="compositionally biased region" description="Basic and acidic residues" evidence="3">
    <location>
        <begin position="26"/>
        <end position="42"/>
    </location>
</feature>
<feature type="compositionally biased region" description="Polar residues" evidence="3">
    <location>
        <begin position="57"/>
        <end position="68"/>
    </location>
</feature>
<feature type="compositionally biased region" description="Polar residues" evidence="3">
    <location>
        <begin position="105"/>
        <end position="117"/>
    </location>
</feature>
<feature type="compositionally biased region" description="Polar residues" evidence="3">
    <location>
        <begin position="125"/>
        <end position="172"/>
    </location>
</feature>
<feature type="compositionally biased region" description="Polar residues" evidence="3">
    <location>
        <begin position="209"/>
        <end position="237"/>
    </location>
</feature>
<feature type="compositionally biased region" description="Low complexity" evidence="3">
    <location>
        <begin position="358"/>
        <end position="371"/>
    </location>
</feature>
<feature type="compositionally biased region" description="Basic and acidic residues" evidence="3">
    <location>
        <begin position="456"/>
        <end position="468"/>
    </location>
</feature>
<keyword id="KW-0175">Coiled coil</keyword>
<keyword id="KW-0539">Nucleus</keyword>
<keyword id="KW-1185">Reference proteome</keyword>
<keyword id="KW-0804">Transcription</keyword>
<keyword id="KW-0805">Transcription regulation</keyword>
<sequence length="522" mass="56663">MSDVSGGESSSHKRNVDSAANENDDMQNKRQKTEELGGHDDQLNDIFNDPLPGFGGSESNSTPYNDNAQEGELGPENFDATLPKEGDPLDIDFDNLPTNFLEAEQATNANNGSQVDTPSGPGSVPNMSVTTNSASMSASPNNTPRPTPLSKTNSRSETPVGNSSRATYDGTNLKQEFGINGLSNKQEALNRYSQMPPTNRMNHLAPQPQGIQGLNTSSIDRIPSTSTSNKEQLHTNDPSKLNDALAAAGVDIQHEEELLMQQHLNRSSRFPSAQQPPRQRFAQTSLFSPYHVAAFMQRVARENGVMQNFYQDAELLELMSTSCENWLSNIITKTIILSRHRRRGIPTITNTKQNKKTASSSASMSNPASRSELSKELRNLAAKQKEMEERRVSKRMALGLEKDGTDPGNGDPANGKAGAEETLHRAANATAAMMTMNPGRKKYSWMTANAGSGGGDDSKVASEKDGKSKQSSIIAARGDNGLRFREIRSGNSVTMKDLLGALEDERMGTEKAVLKGYAKLKD</sequence>
<protein>
    <recommendedName>
        <fullName>Transcription initiation factor TFIID subunit 4</fullName>
    </recommendedName>
    <alternativeName>
        <fullName>TBP-associated factor 4</fullName>
    </alternativeName>
</protein>
<organism>
    <name type="scientific">Debaryomyces hansenii (strain ATCC 36239 / CBS 767 / BCRC 21394 / JCM 1990 / NBRC 0083 / IGC 2968)</name>
    <name type="common">Yeast</name>
    <name type="synonym">Torulaspora hansenii</name>
    <dbReference type="NCBI Taxonomy" id="284592"/>
    <lineage>
        <taxon>Eukaryota</taxon>
        <taxon>Fungi</taxon>
        <taxon>Dikarya</taxon>
        <taxon>Ascomycota</taxon>
        <taxon>Saccharomycotina</taxon>
        <taxon>Pichiomycetes</taxon>
        <taxon>Debaryomycetaceae</taxon>
        <taxon>Debaryomyces</taxon>
    </lineage>
</organism>
<gene>
    <name type="primary">TAF4</name>
    <name type="ordered locus">DEHA2F23408g</name>
</gene>
<evidence type="ECO:0000250" key="1"/>
<evidence type="ECO:0000255" key="2"/>
<evidence type="ECO:0000256" key="3">
    <source>
        <dbReference type="SAM" id="MobiDB-lite"/>
    </source>
</evidence>
<evidence type="ECO:0000305" key="4"/>